<gene>
    <name evidence="1" type="primary">ubiE</name>
    <name type="ordered locus">BPEN_649</name>
</gene>
<proteinExistence type="inferred from homology"/>
<protein>
    <recommendedName>
        <fullName evidence="1">Ubiquinone/menaquinone biosynthesis C-methyltransferase UbiE</fullName>
        <ecNumber evidence="1">2.1.1.163</ecNumber>
        <ecNumber evidence="1">2.1.1.201</ecNumber>
    </recommendedName>
    <alternativeName>
        <fullName evidence="1">2-methoxy-6-polyprenyl-1,4-benzoquinol methylase</fullName>
    </alternativeName>
    <alternativeName>
        <fullName evidence="1">Demethylmenaquinone methyltransferase</fullName>
    </alternativeName>
</protein>
<organism>
    <name type="scientific">Blochmanniella pennsylvanica (strain BPEN)</name>
    <dbReference type="NCBI Taxonomy" id="291272"/>
    <lineage>
        <taxon>Bacteria</taxon>
        <taxon>Pseudomonadati</taxon>
        <taxon>Pseudomonadota</taxon>
        <taxon>Gammaproteobacteria</taxon>
        <taxon>Enterobacterales</taxon>
        <taxon>Enterobacteriaceae</taxon>
        <taxon>ant endosymbionts</taxon>
        <taxon>Candidatus Blochmanniella</taxon>
    </lineage>
</organism>
<evidence type="ECO:0000255" key="1">
    <source>
        <dbReference type="HAMAP-Rule" id="MF_01813"/>
    </source>
</evidence>
<sequence length="254" mass="29131">MNMKNKSEKEMTHFGFQNVYKDKKTSLVSNVFHTVASQYDLMNDLMSFGIHRMWKRFTIYRSEVYVGCIVLDLAGGTGDLSIQFSRLVGNTGIVVLADINDSMLHIGQKKLRDLGILNNVIYIQADAEALPFSENTFDCVAVSFGLRNFTNKEQALFSIHRVLKPRGKLLILDFGVPNFKVLHKIYDLYSFHILPKIGKCITQDINSYRYLVESIRMHPDQETLKNMIIRTGFSNVEYFNMTFGIAVLHCAYKC</sequence>
<comment type="function">
    <text evidence="1">Methyltransferase required for the conversion of demethylmenaquinol (DMKH2) to menaquinol (MKH2) and the conversion of 2-polyprenyl-6-methoxy-1,4-benzoquinol (DDMQH2) to 2-polyprenyl-3-methyl-6-methoxy-1,4-benzoquinol (DMQH2).</text>
</comment>
<comment type="catalytic activity">
    <reaction evidence="1">
        <text>a 2-demethylmenaquinol + S-adenosyl-L-methionine = a menaquinol + S-adenosyl-L-homocysteine + H(+)</text>
        <dbReference type="Rhea" id="RHEA:42640"/>
        <dbReference type="Rhea" id="RHEA-COMP:9539"/>
        <dbReference type="Rhea" id="RHEA-COMP:9563"/>
        <dbReference type="ChEBI" id="CHEBI:15378"/>
        <dbReference type="ChEBI" id="CHEBI:18151"/>
        <dbReference type="ChEBI" id="CHEBI:55437"/>
        <dbReference type="ChEBI" id="CHEBI:57856"/>
        <dbReference type="ChEBI" id="CHEBI:59789"/>
        <dbReference type="EC" id="2.1.1.163"/>
    </reaction>
</comment>
<comment type="catalytic activity">
    <reaction evidence="1">
        <text>a 2-methoxy-6-(all-trans-polyprenyl)benzene-1,4-diol + S-adenosyl-L-methionine = a 5-methoxy-2-methyl-3-(all-trans-polyprenyl)benzene-1,4-diol + S-adenosyl-L-homocysteine + H(+)</text>
        <dbReference type="Rhea" id="RHEA:28286"/>
        <dbReference type="Rhea" id="RHEA-COMP:10858"/>
        <dbReference type="Rhea" id="RHEA-COMP:10859"/>
        <dbReference type="ChEBI" id="CHEBI:15378"/>
        <dbReference type="ChEBI" id="CHEBI:57856"/>
        <dbReference type="ChEBI" id="CHEBI:59789"/>
        <dbReference type="ChEBI" id="CHEBI:84166"/>
        <dbReference type="ChEBI" id="CHEBI:84167"/>
        <dbReference type="EC" id="2.1.1.201"/>
    </reaction>
</comment>
<comment type="pathway">
    <text evidence="1">Quinol/quinone metabolism; menaquinone biosynthesis; menaquinol from 1,4-dihydroxy-2-naphthoate: step 2/2.</text>
</comment>
<comment type="pathway">
    <text evidence="1">Cofactor biosynthesis; ubiquinone biosynthesis.</text>
</comment>
<comment type="similarity">
    <text evidence="1">Belongs to the class I-like SAM-binding methyltransferase superfamily. MenG/UbiE family.</text>
</comment>
<reference key="1">
    <citation type="journal article" date="2005" name="Genome Res.">
        <title>Genome sequence of Blochmannia pennsylvanicus indicates parallel evolutionary trends among bacterial mutualists of insects.</title>
        <authorList>
            <person name="Degnan P.H."/>
            <person name="Lazarus A.B."/>
            <person name="Wernegreen J.J."/>
        </authorList>
    </citation>
    <scope>NUCLEOTIDE SEQUENCE [LARGE SCALE GENOMIC DNA]</scope>
    <source>
        <strain>BPEN</strain>
    </source>
</reference>
<feature type="chain" id="PRO_1000056221" description="Ubiquinone/menaquinone biosynthesis C-methyltransferase UbiE">
    <location>
        <begin position="1"/>
        <end position="254"/>
    </location>
</feature>
<feature type="binding site" evidence="1">
    <location>
        <position position="77"/>
    </location>
    <ligand>
        <name>S-adenosyl-L-methionine</name>
        <dbReference type="ChEBI" id="CHEBI:59789"/>
    </ligand>
</feature>
<feature type="binding site" evidence="1">
    <location>
        <position position="98"/>
    </location>
    <ligand>
        <name>S-adenosyl-L-methionine</name>
        <dbReference type="ChEBI" id="CHEBI:59789"/>
    </ligand>
</feature>
<feature type="binding site" evidence="1">
    <location>
        <begin position="126"/>
        <end position="127"/>
    </location>
    <ligand>
        <name>S-adenosyl-L-methionine</name>
        <dbReference type="ChEBI" id="CHEBI:59789"/>
    </ligand>
</feature>
<feature type="binding site" evidence="1">
    <location>
        <position position="143"/>
    </location>
    <ligand>
        <name>S-adenosyl-L-methionine</name>
        <dbReference type="ChEBI" id="CHEBI:59789"/>
    </ligand>
</feature>
<dbReference type="EC" id="2.1.1.163" evidence="1"/>
<dbReference type="EC" id="2.1.1.201" evidence="1"/>
<dbReference type="EMBL" id="CP000016">
    <property type="protein sequence ID" value="AAZ41247.1"/>
    <property type="molecule type" value="Genomic_DNA"/>
</dbReference>
<dbReference type="SMR" id="Q491V7"/>
<dbReference type="STRING" id="291272.BPEN_649"/>
<dbReference type="KEGG" id="bpn:BPEN_649"/>
<dbReference type="eggNOG" id="COG2226">
    <property type="taxonomic scope" value="Bacteria"/>
</dbReference>
<dbReference type="HOGENOM" id="CLU_037990_0_0_6"/>
<dbReference type="OrthoDB" id="9808140at2"/>
<dbReference type="UniPathway" id="UPA00079">
    <property type="reaction ID" value="UER00169"/>
</dbReference>
<dbReference type="UniPathway" id="UPA00232"/>
<dbReference type="Proteomes" id="UP000007794">
    <property type="component" value="Chromosome"/>
</dbReference>
<dbReference type="GO" id="GO:0008425">
    <property type="term" value="F:2-methoxy-6-polyprenyl-1,4-benzoquinol methyltransferase activity"/>
    <property type="evidence" value="ECO:0007669"/>
    <property type="project" value="UniProtKB-UniRule"/>
</dbReference>
<dbReference type="GO" id="GO:0043770">
    <property type="term" value="F:demethylmenaquinone methyltransferase activity"/>
    <property type="evidence" value="ECO:0007669"/>
    <property type="project" value="UniProtKB-UniRule"/>
</dbReference>
<dbReference type="GO" id="GO:0009060">
    <property type="term" value="P:aerobic respiration"/>
    <property type="evidence" value="ECO:0007669"/>
    <property type="project" value="UniProtKB-UniRule"/>
</dbReference>
<dbReference type="GO" id="GO:0009234">
    <property type="term" value="P:menaquinone biosynthetic process"/>
    <property type="evidence" value="ECO:0007669"/>
    <property type="project" value="UniProtKB-UniRule"/>
</dbReference>
<dbReference type="GO" id="GO:0032259">
    <property type="term" value="P:methylation"/>
    <property type="evidence" value="ECO:0007669"/>
    <property type="project" value="UniProtKB-KW"/>
</dbReference>
<dbReference type="CDD" id="cd02440">
    <property type="entry name" value="AdoMet_MTases"/>
    <property type="match status" value="1"/>
</dbReference>
<dbReference type="Gene3D" id="3.40.50.150">
    <property type="entry name" value="Vaccinia Virus protein VP39"/>
    <property type="match status" value="1"/>
</dbReference>
<dbReference type="HAMAP" id="MF_01813">
    <property type="entry name" value="MenG_UbiE_methyltr"/>
    <property type="match status" value="1"/>
</dbReference>
<dbReference type="InterPro" id="IPR029063">
    <property type="entry name" value="SAM-dependent_MTases_sf"/>
</dbReference>
<dbReference type="InterPro" id="IPR004033">
    <property type="entry name" value="UbiE/COQ5_MeTrFase"/>
</dbReference>
<dbReference type="InterPro" id="IPR023576">
    <property type="entry name" value="UbiE/COQ5_MeTrFase_CS"/>
</dbReference>
<dbReference type="NCBIfam" id="TIGR01934">
    <property type="entry name" value="MenG_MenH_UbiE"/>
    <property type="match status" value="1"/>
</dbReference>
<dbReference type="NCBIfam" id="NF001240">
    <property type="entry name" value="PRK00216.1-1"/>
    <property type="match status" value="1"/>
</dbReference>
<dbReference type="NCBIfam" id="NF001244">
    <property type="entry name" value="PRK00216.1-5"/>
    <property type="match status" value="1"/>
</dbReference>
<dbReference type="PANTHER" id="PTHR43591:SF24">
    <property type="entry name" value="2-METHOXY-6-POLYPRENYL-1,4-BENZOQUINOL METHYLASE, MITOCHONDRIAL"/>
    <property type="match status" value="1"/>
</dbReference>
<dbReference type="PANTHER" id="PTHR43591">
    <property type="entry name" value="METHYLTRANSFERASE"/>
    <property type="match status" value="1"/>
</dbReference>
<dbReference type="Pfam" id="PF01209">
    <property type="entry name" value="Ubie_methyltran"/>
    <property type="match status" value="1"/>
</dbReference>
<dbReference type="SUPFAM" id="SSF53335">
    <property type="entry name" value="S-adenosyl-L-methionine-dependent methyltransferases"/>
    <property type="match status" value="1"/>
</dbReference>
<dbReference type="PROSITE" id="PS51608">
    <property type="entry name" value="SAM_MT_UBIE"/>
    <property type="match status" value="1"/>
</dbReference>
<dbReference type="PROSITE" id="PS01183">
    <property type="entry name" value="UBIE_1"/>
    <property type="match status" value="1"/>
</dbReference>
<name>UBIE_BLOPB</name>
<accession>Q491V7</accession>
<keyword id="KW-0474">Menaquinone biosynthesis</keyword>
<keyword id="KW-0489">Methyltransferase</keyword>
<keyword id="KW-1185">Reference proteome</keyword>
<keyword id="KW-0949">S-adenosyl-L-methionine</keyword>
<keyword id="KW-0808">Transferase</keyword>
<keyword id="KW-0831">Ubiquinone biosynthesis</keyword>